<name>CYB_CALLE</name>
<gene>
    <name type="primary">MT-CYB</name>
    <name type="synonym">COB</name>
    <name type="synonym">CYTB</name>
    <name type="synonym">MTCYB</name>
</gene>
<sequence length="380" mass="42612">MAPNIRKSHPLLKMVNNSLIDLPAPSNISAWWNFGSLLGVCLLTQILTGLLLAMHYTADTTLAFSSVAHTCRNVQYGWLIRNLHANGASFFFICIYLHIGRGFYYGSYLYKETWNTGVILLLTLMATAFVGYVLPWGQMSFWGATVITNLFSAIPYIGQTLVEWAWGGFSVDNPTLTRFFALHFLLPFMIAGLTLIHLTFLHESGSNNPLGIVSNCDKIPFHPYFTLKDILGFMLMFLPLTTLALFSPNLLGDPENFTPANPLVTPPHIKPEWYFLFAYAILRSIPNKLGGVLALAASVLVLFLAPFLHKAKQRAMTFRPLSQLLFWILVANLFILTWVGSQPVEHPFIIIGQLASLTYFTILLILFPITGALENKMLNY</sequence>
<organism>
    <name type="scientific">Calonectris leucomelas</name>
    <name type="common">Streaked shearwater</name>
    <dbReference type="NCBI Taxonomy" id="79622"/>
    <lineage>
        <taxon>Eukaryota</taxon>
        <taxon>Metazoa</taxon>
        <taxon>Chordata</taxon>
        <taxon>Craniata</taxon>
        <taxon>Vertebrata</taxon>
        <taxon>Euteleostomi</taxon>
        <taxon>Archelosauria</taxon>
        <taxon>Archosauria</taxon>
        <taxon>Dinosauria</taxon>
        <taxon>Saurischia</taxon>
        <taxon>Theropoda</taxon>
        <taxon>Coelurosauria</taxon>
        <taxon>Aves</taxon>
        <taxon>Neognathae</taxon>
        <taxon>Neoaves</taxon>
        <taxon>Aequornithes</taxon>
        <taxon>Procellariiformes</taxon>
        <taxon>Procellariidae</taxon>
        <taxon>Calonectris</taxon>
    </lineage>
</organism>
<keyword id="KW-0249">Electron transport</keyword>
<keyword id="KW-0349">Heme</keyword>
<keyword id="KW-0408">Iron</keyword>
<keyword id="KW-0472">Membrane</keyword>
<keyword id="KW-0479">Metal-binding</keyword>
<keyword id="KW-0496">Mitochondrion</keyword>
<keyword id="KW-0999">Mitochondrion inner membrane</keyword>
<keyword id="KW-0679">Respiratory chain</keyword>
<keyword id="KW-0812">Transmembrane</keyword>
<keyword id="KW-1133">Transmembrane helix</keyword>
<keyword id="KW-0813">Transport</keyword>
<keyword id="KW-0830">Ubiquinone</keyword>
<geneLocation type="mitochondrion"/>
<proteinExistence type="inferred from homology"/>
<evidence type="ECO:0000250" key="1"/>
<evidence type="ECO:0000250" key="2">
    <source>
        <dbReference type="UniProtKB" id="P00157"/>
    </source>
</evidence>
<evidence type="ECO:0000255" key="3">
    <source>
        <dbReference type="PROSITE-ProRule" id="PRU00967"/>
    </source>
</evidence>
<evidence type="ECO:0000255" key="4">
    <source>
        <dbReference type="PROSITE-ProRule" id="PRU00968"/>
    </source>
</evidence>
<comment type="function">
    <text evidence="2">Component of the ubiquinol-cytochrome c reductase complex (complex III or cytochrome b-c1 complex) that is part of the mitochondrial respiratory chain. The b-c1 complex mediates electron transfer from ubiquinol to cytochrome c. Contributes to the generation of a proton gradient across the mitochondrial membrane that is then used for ATP synthesis.</text>
</comment>
<comment type="cofactor">
    <cofactor evidence="2">
        <name>heme b</name>
        <dbReference type="ChEBI" id="CHEBI:60344"/>
    </cofactor>
    <text evidence="2">Binds 2 heme b groups non-covalently.</text>
</comment>
<comment type="subunit">
    <text evidence="2">The cytochrome bc1 complex contains 11 subunits: 3 respiratory subunits (MT-CYB, CYC1 and UQCRFS1), 2 core proteins (UQCRC1 and UQCRC2) and 6 low-molecular weight proteins (UQCRH/QCR6, UQCRB/QCR7, UQCRQ/QCR8, UQCR10/QCR9, UQCR11/QCR10 and a cleavage product of UQCRFS1). This cytochrome bc1 complex then forms a dimer.</text>
</comment>
<comment type="subcellular location">
    <subcellularLocation>
        <location evidence="2">Mitochondrion inner membrane</location>
        <topology evidence="2">Multi-pass membrane protein</topology>
    </subcellularLocation>
</comment>
<comment type="miscellaneous">
    <text evidence="1">Heme 1 (or BL or b562) is low-potential and absorbs at about 562 nm, and heme 2 (or BH or b566) is high-potential and absorbs at about 566 nm.</text>
</comment>
<comment type="similarity">
    <text evidence="3 4">Belongs to the cytochrome b family.</text>
</comment>
<comment type="caution">
    <text evidence="2">The full-length protein contains only eight transmembrane helices, not nine as predicted by bioinformatics tools.</text>
</comment>
<reference key="1">
    <citation type="journal article" date="1998" name="Mol. Biol. Evol.">
        <title>Body size effects and rates of cytochrome-b evolution in tube-nosed seabirds.</title>
        <authorList>
            <person name="Nunn G.B."/>
            <person name="Stanley S.E."/>
        </authorList>
    </citation>
    <scope>NUCLEOTIDE SEQUENCE [GENOMIC DNA]</scope>
    <source>
        <strain>Isolate Calleu</strain>
    </source>
</reference>
<protein>
    <recommendedName>
        <fullName>Cytochrome b</fullName>
    </recommendedName>
    <alternativeName>
        <fullName>Complex III subunit 3</fullName>
    </alternativeName>
    <alternativeName>
        <fullName>Complex III subunit III</fullName>
    </alternativeName>
    <alternativeName>
        <fullName>Cytochrome b-c1 complex subunit 3</fullName>
    </alternativeName>
    <alternativeName>
        <fullName>Ubiquinol-cytochrome-c reductase complex cytochrome b subunit</fullName>
    </alternativeName>
</protein>
<feature type="chain" id="PRO_0000060709" description="Cytochrome b">
    <location>
        <begin position="1"/>
        <end position="380"/>
    </location>
</feature>
<feature type="transmembrane region" description="Helical" evidence="2">
    <location>
        <begin position="34"/>
        <end position="54"/>
    </location>
</feature>
<feature type="transmembrane region" description="Helical" evidence="2">
    <location>
        <begin position="78"/>
        <end position="99"/>
    </location>
</feature>
<feature type="transmembrane region" description="Helical" evidence="2">
    <location>
        <begin position="114"/>
        <end position="134"/>
    </location>
</feature>
<feature type="transmembrane region" description="Helical" evidence="2">
    <location>
        <begin position="179"/>
        <end position="199"/>
    </location>
</feature>
<feature type="transmembrane region" description="Helical" evidence="2">
    <location>
        <begin position="227"/>
        <end position="247"/>
    </location>
</feature>
<feature type="transmembrane region" description="Helical" evidence="2">
    <location>
        <begin position="289"/>
        <end position="309"/>
    </location>
</feature>
<feature type="transmembrane region" description="Helical" evidence="2">
    <location>
        <begin position="321"/>
        <end position="341"/>
    </location>
</feature>
<feature type="transmembrane region" description="Helical" evidence="2">
    <location>
        <begin position="348"/>
        <end position="368"/>
    </location>
</feature>
<feature type="binding site" description="axial binding residue" evidence="2">
    <location>
        <position position="84"/>
    </location>
    <ligand>
        <name>heme b</name>
        <dbReference type="ChEBI" id="CHEBI:60344"/>
        <label>b562</label>
    </ligand>
    <ligandPart>
        <name>Fe</name>
        <dbReference type="ChEBI" id="CHEBI:18248"/>
    </ligandPart>
</feature>
<feature type="binding site" description="axial binding residue" evidence="2">
    <location>
        <position position="98"/>
    </location>
    <ligand>
        <name>heme b</name>
        <dbReference type="ChEBI" id="CHEBI:60344"/>
        <label>b566</label>
    </ligand>
    <ligandPart>
        <name>Fe</name>
        <dbReference type="ChEBI" id="CHEBI:18248"/>
    </ligandPart>
</feature>
<feature type="binding site" description="axial binding residue" evidence="2">
    <location>
        <position position="183"/>
    </location>
    <ligand>
        <name>heme b</name>
        <dbReference type="ChEBI" id="CHEBI:60344"/>
        <label>b562</label>
    </ligand>
    <ligandPart>
        <name>Fe</name>
        <dbReference type="ChEBI" id="CHEBI:18248"/>
    </ligandPart>
</feature>
<feature type="binding site" description="axial binding residue" evidence="2">
    <location>
        <position position="197"/>
    </location>
    <ligand>
        <name>heme b</name>
        <dbReference type="ChEBI" id="CHEBI:60344"/>
        <label>b566</label>
    </ligand>
    <ligandPart>
        <name>Fe</name>
        <dbReference type="ChEBI" id="CHEBI:18248"/>
    </ligandPart>
</feature>
<feature type="binding site" evidence="2">
    <location>
        <position position="202"/>
    </location>
    <ligand>
        <name>a ubiquinone</name>
        <dbReference type="ChEBI" id="CHEBI:16389"/>
    </ligand>
</feature>
<dbReference type="EMBL" id="AF076045">
    <property type="protein sequence ID" value="AAC68602.1"/>
    <property type="molecule type" value="Genomic_DNA"/>
</dbReference>
<dbReference type="SMR" id="O79196"/>
<dbReference type="GO" id="GO:0005743">
    <property type="term" value="C:mitochondrial inner membrane"/>
    <property type="evidence" value="ECO:0007669"/>
    <property type="project" value="UniProtKB-SubCell"/>
</dbReference>
<dbReference type="GO" id="GO:0045275">
    <property type="term" value="C:respiratory chain complex III"/>
    <property type="evidence" value="ECO:0007669"/>
    <property type="project" value="InterPro"/>
</dbReference>
<dbReference type="GO" id="GO:0046872">
    <property type="term" value="F:metal ion binding"/>
    <property type="evidence" value="ECO:0007669"/>
    <property type="project" value="UniProtKB-KW"/>
</dbReference>
<dbReference type="GO" id="GO:0008121">
    <property type="term" value="F:ubiquinol-cytochrome-c reductase activity"/>
    <property type="evidence" value="ECO:0007669"/>
    <property type="project" value="InterPro"/>
</dbReference>
<dbReference type="GO" id="GO:0006122">
    <property type="term" value="P:mitochondrial electron transport, ubiquinol to cytochrome c"/>
    <property type="evidence" value="ECO:0007669"/>
    <property type="project" value="TreeGrafter"/>
</dbReference>
<dbReference type="CDD" id="cd00290">
    <property type="entry name" value="cytochrome_b_C"/>
    <property type="match status" value="1"/>
</dbReference>
<dbReference type="CDD" id="cd00284">
    <property type="entry name" value="Cytochrome_b_N"/>
    <property type="match status" value="1"/>
</dbReference>
<dbReference type="FunFam" id="1.20.810.10:FF:000002">
    <property type="entry name" value="Cytochrome b"/>
    <property type="match status" value="1"/>
</dbReference>
<dbReference type="Gene3D" id="1.20.810.10">
    <property type="entry name" value="Cytochrome Bc1 Complex, Chain C"/>
    <property type="match status" value="1"/>
</dbReference>
<dbReference type="InterPro" id="IPR005798">
    <property type="entry name" value="Cyt_b/b6_C"/>
</dbReference>
<dbReference type="InterPro" id="IPR036150">
    <property type="entry name" value="Cyt_b/b6_C_sf"/>
</dbReference>
<dbReference type="InterPro" id="IPR005797">
    <property type="entry name" value="Cyt_b/b6_N"/>
</dbReference>
<dbReference type="InterPro" id="IPR027387">
    <property type="entry name" value="Cytb/b6-like_sf"/>
</dbReference>
<dbReference type="InterPro" id="IPR030689">
    <property type="entry name" value="Cytochrome_b"/>
</dbReference>
<dbReference type="InterPro" id="IPR048260">
    <property type="entry name" value="Cytochrome_b_C_euk/bac"/>
</dbReference>
<dbReference type="InterPro" id="IPR048259">
    <property type="entry name" value="Cytochrome_b_N_euk/bac"/>
</dbReference>
<dbReference type="InterPro" id="IPR016174">
    <property type="entry name" value="Di-haem_cyt_TM"/>
</dbReference>
<dbReference type="PANTHER" id="PTHR19271">
    <property type="entry name" value="CYTOCHROME B"/>
    <property type="match status" value="1"/>
</dbReference>
<dbReference type="PANTHER" id="PTHR19271:SF16">
    <property type="entry name" value="CYTOCHROME B"/>
    <property type="match status" value="1"/>
</dbReference>
<dbReference type="Pfam" id="PF00032">
    <property type="entry name" value="Cytochrom_B_C"/>
    <property type="match status" value="1"/>
</dbReference>
<dbReference type="Pfam" id="PF00033">
    <property type="entry name" value="Cytochrome_B"/>
    <property type="match status" value="1"/>
</dbReference>
<dbReference type="PIRSF" id="PIRSF038885">
    <property type="entry name" value="COB"/>
    <property type="match status" value="1"/>
</dbReference>
<dbReference type="SUPFAM" id="SSF81648">
    <property type="entry name" value="a domain/subunit of cytochrome bc1 complex (Ubiquinol-cytochrome c reductase)"/>
    <property type="match status" value="1"/>
</dbReference>
<dbReference type="SUPFAM" id="SSF81342">
    <property type="entry name" value="Transmembrane di-heme cytochromes"/>
    <property type="match status" value="1"/>
</dbReference>
<dbReference type="PROSITE" id="PS51003">
    <property type="entry name" value="CYTB_CTER"/>
    <property type="match status" value="1"/>
</dbReference>
<dbReference type="PROSITE" id="PS51002">
    <property type="entry name" value="CYTB_NTER"/>
    <property type="match status" value="1"/>
</dbReference>
<accession>O79196</accession>